<gene>
    <name evidence="1" type="primary">hemC</name>
    <name type="ordered locus">Bsph_3970</name>
</gene>
<organism>
    <name type="scientific">Lysinibacillus sphaericus (strain C3-41)</name>
    <dbReference type="NCBI Taxonomy" id="444177"/>
    <lineage>
        <taxon>Bacteria</taxon>
        <taxon>Bacillati</taxon>
        <taxon>Bacillota</taxon>
        <taxon>Bacilli</taxon>
        <taxon>Bacillales</taxon>
        <taxon>Bacillaceae</taxon>
        <taxon>Lysinibacillus</taxon>
    </lineage>
</organism>
<name>HEM3_LYSSC</name>
<sequence length="310" mass="33741">MRKIIVGSRRSKLALTQTNWFINELKAAGAPFEFEVKEIVTKGDQILDVQLSKVGGKGLFVKEIEQALYEKEIDFAVHSMKDMPAVLPEGLVIGCIPPREDARDAFISKGHVKFSELPAGAVVGTSSLRRSAQLLTVRPDLEIKWIRGNVDTRLAKLETEEYDAIILAAAGLKRLGWSEDVVTEFLSVEDCLPAVAQGSLGIECREDDTELLDELAKLTDQLTWQEAHAERAFLAAMDGGCQVPIAGYATSNGEEITLTGLVAAPDASVVYKETVVGSDAQKIGEELATILTKQGAFDLIQRVKAEQDAK</sequence>
<comment type="function">
    <text evidence="1">Tetrapolymerization of the monopyrrole PBG into the hydroxymethylbilane pre-uroporphyrinogen in several discrete steps.</text>
</comment>
<comment type="catalytic activity">
    <reaction evidence="1">
        <text>4 porphobilinogen + H2O = hydroxymethylbilane + 4 NH4(+)</text>
        <dbReference type="Rhea" id="RHEA:13185"/>
        <dbReference type="ChEBI" id="CHEBI:15377"/>
        <dbReference type="ChEBI" id="CHEBI:28938"/>
        <dbReference type="ChEBI" id="CHEBI:57845"/>
        <dbReference type="ChEBI" id="CHEBI:58126"/>
        <dbReference type="EC" id="2.5.1.61"/>
    </reaction>
</comment>
<comment type="cofactor">
    <cofactor evidence="1">
        <name>dipyrromethane</name>
        <dbReference type="ChEBI" id="CHEBI:60342"/>
    </cofactor>
    <text evidence="1">Binds 1 dipyrromethane group covalently.</text>
</comment>
<comment type="pathway">
    <text evidence="1">Porphyrin-containing compound metabolism; protoporphyrin-IX biosynthesis; coproporphyrinogen-III from 5-aminolevulinate: step 2/4.</text>
</comment>
<comment type="subunit">
    <text evidence="1">Monomer.</text>
</comment>
<comment type="miscellaneous">
    <text evidence="1">The porphobilinogen subunits are added to the dipyrromethane group.</text>
</comment>
<comment type="similarity">
    <text evidence="1">Belongs to the HMBS family.</text>
</comment>
<proteinExistence type="inferred from homology"/>
<keyword id="KW-0627">Porphyrin biosynthesis</keyword>
<keyword id="KW-0808">Transferase</keyword>
<protein>
    <recommendedName>
        <fullName evidence="1">Porphobilinogen deaminase</fullName>
        <shortName evidence="1">PBG</shortName>
        <ecNumber evidence="1">2.5.1.61</ecNumber>
    </recommendedName>
    <alternativeName>
        <fullName evidence="1">Hydroxymethylbilane synthase</fullName>
        <shortName evidence="1">HMBS</shortName>
    </alternativeName>
    <alternativeName>
        <fullName evidence="1">Pre-uroporphyrinogen synthase</fullName>
    </alternativeName>
</protein>
<reference key="1">
    <citation type="journal article" date="2008" name="J. Bacteriol.">
        <title>Complete genome sequence of the mosquitocidal bacterium Bacillus sphaericus C3-41 and comparison with those of closely related Bacillus species.</title>
        <authorList>
            <person name="Hu X."/>
            <person name="Fan W."/>
            <person name="Han B."/>
            <person name="Liu H."/>
            <person name="Zheng D."/>
            <person name="Li Q."/>
            <person name="Dong W."/>
            <person name="Yan J."/>
            <person name="Gao M."/>
            <person name="Berry C."/>
            <person name="Yuan Z."/>
        </authorList>
    </citation>
    <scope>NUCLEOTIDE SEQUENCE [LARGE SCALE GENOMIC DNA]</scope>
    <source>
        <strain>C3-41</strain>
    </source>
</reference>
<feature type="chain" id="PRO_1000114162" description="Porphobilinogen deaminase">
    <location>
        <begin position="1"/>
        <end position="310"/>
    </location>
</feature>
<feature type="modified residue" description="S-(dipyrrolylmethanemethyl)cysteine" evidence="1">
    <location>
        <position position="241"/>
    </location>
</feature>
<accession>B1HVD6</accession>
<dbReference type="EC" id="2.5.1.61" evidence="1"/>
<dbReference type="EMBL" id="CP000817">
    <property type="protein sequence ID" value="ACA41438.1"/>
    <property type="molecule type" value="Genomic_DNA"/>
</dbReference>
<dbReference type="RefSeq" id="WP_012295482.1">
    <property type="nucleotide sequence ID" value="NC_010382.1"/>
</dbReference>
<dbReference type="SMR" id="B1HVD6"/>
<dbReference type="EnsemblBacteria" id="ACA41438">
    <property type="protein sequence ID" value="ACA41438"/>
    <property type="gene ID" value="Bsph_3970"/>
</dbReference>
<dbReference type="KEGG" id="lsp:Bsph_3970"/>
<dbReference type="HOGENOM" id="CLU_019704_0_2_9"/>
<dbReference type="UniPathway" id="UPA00251">
    <property type="reaction ID" value="UER00319"/>
</dbReference>
<dbReference type="Proteomes" id="UP000002164">
    <property type="component" value="Chromosome"/>
</dbReference>
<dbReference type="GO" id="GO:0005737">
    <property type="term" value="C:cytoplasm"/>
    <property type="evidence" value="ECO:0007669"/>
    <property type="project" value="TreeGrafter"/>
</dbReference>
<dbReference type="GO" id="GO:0004418">
    <property type="term" value="F:hydroxymethylbilane synthase activity"/>
    <property type="evidence" value="ECO:0007669"/>
    <property type="project" value="UniProtKB-UniRule"/>
</dbReference>
<dbReference type="GO" id="GO:0006782">
    <property type="term" value="P:protoporphyrinogen IX biosynthetic process"/>
    <property type="evidence" value="ECO:0007669"/>
    <property type="project" value="UniProtKB-UniRule"/>
</dbReference>
<dbReference type="CDD" id="cd13646">
    <property type="entry name" value="PBP2_EcHMBS_like"/>
    <property type="match status" value="1"/>
</dbReference>
<dbReference type="FunFam" id="3.40.190.10:FF:000004">
    <property type="entry name" value="Porphobilinogen deaminase"/>
    <property type="match status" value="1"/>
</dbReference>
<dbReference type="FunFam" id="3.40.190.10:FF:000005">
    <property type="entry name" value="Porphobilinogen deaminase"/>
    <property type="match status" value="1"/>
</dbReference>
<dbReference type="Gene3D" id="3.40.190.10">
    <property type="entry name" value="Periplasmic binding protein-like II"/>
    <property type="match status" value="2"/>
</dbReference>
<dbReference type="Gene3D" id="3.30.160.40">
    <property type="entry name" value="Porphobilinogen deaminase, C-terminal domain"/>
    <property type="match status" value="1"/>
</dbReference>
<dbReference type="HAMAP" id="MF_00260">
    <property type="entry name" value="Porphobil_deam"/>
    <property type="match status" value="1"/>
</dbReference>
<dbReference type="InterPro" id="IPR000860">
    <property type="entry name" value="HemC"/>
</dbReference>
<dbReference type="InterPro" id="IPR022419">
    <property type="entry name" value="Porphobilin_deaminase_cofac_BS"/>
</dbReference>
<dbReference type="InterPro" id="IPR022417">
    <property type="entry name" value="Porphobilin_deaminase_N"/>
</dbReference>
<dbReference type="InterPro" id="IPR022418">
    <property type="entry name" value="Porphobilinogen_deaminase_C"/>
</dbReference>
<dbReference type="InterPro" id="IPR036803">
    <property type="entry name" value="Porphobilinogen_deaminase_C_sf"/>
</dbReference>
<dbReference type="NCBIfam" id="TIGR00212">
    <property type="entry name" value="hemC"/>
    <property type="match status" value="1"/>
</dbReference>
<dbReference type="PANTHER" id="PTHR11557">
    <property type="entry name" value="PORPHOBILINOGEN DEAMINASE"/>
    <property type="match status" value="1"/>
</dbReference>
<dbReference type="PANTHER" id="PTHR11557:SF0">
    <property type="entry name" value="PORPHOBILINOGEN DEAMINASE"/>
    <property type="match status" value="1"/>
</dbReference>
<dbReference type="Pfam" id="PF01379">
    <property type="entry name" value="Porphobil_deam"/>
    <property type="match status" value="1"/>
</dbReference>
<dbReference type="Pfam" id="PF03900">
    <property type="entry name" value="Porphobil_deamC"/>
    <property type="match status" value="1"/>
</dbReference>
<dbReference type="PIRSF" id="PIRSF001438">
    <property type="entry name" value="4pyrrol_synth_OHMeBilane_synth"/>
    <property type="match status" value="1"/>
</dbReference>
<dbReference type="PRINTS" id="PR00151">
    <property type="entry name" value="PORPHBDMNASE"/>
</dbReference>
<dbReference type="SUPFAM" id="SSF53850">
    <property type="entry name" value="Periplasmic binding protein-like II"/>
    <property type="match status" value="1"/>
</dbReference>
<dbReference type="SUPFAM" id="SSF54782">
    <property type="entry name" value="Porphobilinogen deaminase (hydroxymethylbilane synthase), C-terminal domain"/>
    <property type="match status" value="1"/>
</dbReference>
<dbReference type="PROSITE" id="PS00533">
    <property type="entry name" value="PORPHOBILINOGEN_DEAM"/>
    <property type="match status" value="1"/>
</dbReference>
<evidence type="ECO:0000255" key="1">
    <source>
        <dbReference type="HAMAP-Rule" id="MF_00260"/>
    </source>
</evidence>